<name>TAER_MYCTO</name>
<reference key="1">
    <citation type="journal article" date="2002" name="J. Bacteriol.">
        <title>Whole-genome comparison of Mycobacterium tuberculosis clinical and laboratory strains.</title>
        <authorList>
            <person name="Fleischmann R.D."/>
            <person name="Alland D."/>
            <person name="Eisen J.A."/>
            <person name="Carpenter L."/>
            <person name="White O."/>
            <person name="Peterson J.D."/>
            <person name="DeBoy R.T."/>
            <person name="Dodson R.J."/>
            <person name="Gwinn M.L."/>
            <person name="Haft D.H."/>
            <person name="Hickey E.K."/>
            <person name="Kolonay J.F."/>
            <person name="Nelson W.C."/>
            <person name="Umayam L.A."/>
            <person name="Ermolaeva M.D."/>
            <person name="Salzberg S.L."/>
            <person name="Delcher A."/>
            <person name="Utterback T.R."/>
            <person name="Weidman J.F."/>
            <person name="Khouri H.M."/>
            <person name="Gill J."/>
            <person name="Mikula A."/>
            <person name="Bishai W."/>
            <person name="Jacobs W.R. Jr."/>
            <person name="Venter J.C."/>
            <person name="Fraser C.M."/>
        </authorList>
    </citation>
    <scope>NUCLEOTIDE SEQUENCE [LARGE SCALE GENOMIC DNA]</scope>
    <source>
        <strain>CDC 1551 / Oshkosh</strain>
    </source>
</reference>
<sequence>MSPAEREFDIVLYGATGFSGKLTAEHLAHSGSTARIALAGRSSERLRGVRMMLGPNAADWPLILADASQPLTLEAMAARAQVVLTTVGPYTRYGLPLVAACAKAGTDYADLTGELMFCRNSIDLYHKQAADTGARIILACGFDSIPSDLNVYQLYRRSVEDGTGELCDTDLVLRSFSQRWVSGGSVATYSEAMRTASSDPEARRLVTDPYTLTTDRGAEPELGAQPDFLRRPGRDLAPELAGFWTGGFVQAPFNTRIVRRSNALQEWAYGRRFRYSETMSLGKSMAAPILAAAVTGTVAGTIGLGNKYFDRLPRRLVERVTPKPGTGPSRKTQERGHYTFETYTTTTTGARYRATFAHNVDAYKSTAVLLAQSGLALALDRDRLAELRGVLTPAAAMGDALLARLPGAGVVMGTTRLS</sequence>
<organism>
    <name type="scientific">Mycobacterium tuberculosis (strain CDC 1551 / Oshkosh)</name>
    <dbReference type="NCBI Taxonomy" id="83331"/>
    <lineage>
        <taxon>Bacteria</taxon>
        <taxon>Bacillati</taxon>
        <taxon>Actinomycetota</taxon>
        <taxon>Actinomycetes</taxon>
        <taxon>Mycobacteriales</taxon>
        <taxon>Mycobacteriaceae</taxon>
        <taxon>Mycobacterium</taxon>
        <taxon>Mycobacterium tuberculosis complex</taxon>
    </lineage>
</organism>
<gene>
    <name type="ordered locus">MT3027</name>
</gene>
<evidence type="ECO:0000250" key="1"/>
<evidence type="ECO:0000305" key="2"/>
<protein>
    <recommendedName>
        <fullName>Trans-acting enoyl reductase</fullName>
        <ecNumber>1.3.1.-</ecNumber>
    </recommendedName>
</protein>
<feature type="chain" id="PRO_0000428296" description="Trans-acting enoyl reductase">
    <location>
        <begin position="1"/>
        <end position="418"/>
    </location>
</feature>
<comment type="function">
    <text evidence="1">Involved in the reduction of the double bond between C-4 and C-5 during phthiocerol dimycocerosates (DIM A) and glycosylated phenolphthiocerol dimycocerosates (PGL) biosynthesis.</text>
</comment>
<comment type="similarity">
    <text evidence="2">Belongs to the saccharopine dehydrogenase family. Enoyl reductase subfamily.</text>
</comment>
<dbReference type="EC" id="1.3.1.-"/>
<dbReference type="EMBL" id="AE000516">
    <property type="protein sequence ID" value="AAK47353.1"/>
    <property type="molecule type" value="Genomic_DNA"/>
</dbReference>
<dbReference type="PIR" id="F70669">
    <property type="entry name" value="F70669"/>
</dbReference>
<dbReference type="RefSeq" id="WP_003414903.1">
    <property type="nucleotide sequence ID" value="NZ_KK341227.1"/>
</dbReference>
<dbReference type="KEGG" id="mtc:MT3027"/>
<dbReference type="PATRIC" id="fig|83331.31.peg.3269"/>
<dbReference type="HOGENOM" id="CLU_031002_0_2_11"/>
<dbReference type="Proteomes" id="UP000001020">
    <property type="component" value="Chromosome"/>
</dbReference>
<dbReference type="GO" id="GO:0005886">
    <property type="term" value="C:plasma membrane"/>
    <property type="evidence" value="ECO:0007669"/>
    <property type="project" value="TreeGrafter"/>
</dbReference>
<dbReference type="GO" id="GO:0016491">
    <property type="term" value="F:oxidoreductase activity"/>
    <property type="evidence" value="ECO:0007669"/>
    <property type="project" value="UniProtKB-KW"/>
</dbReference>
<dbReference type="GO" id="GO:0009247">
    <property type="term" value="P:glycolipid biosynthetic process"/>
    <property type="evidence" value="ECO:0007669"/>
    <property type="project" value="TreeGrafter"/>
</dbReference>
<dbReference type="FunFam" id="3.40.50.720:FF:000413">
    <property type="entry name" value="Trans-acting enoyl reductase"/>
    <property type="match status" value="1"/>
</dbReference>
<dbReference type="Gene3D" id="3.40.50.720">
    <property type="entry name" value="NAD(P)-binding Rossmann-like Domain"/>
    <property type="match status" value="1"/>
</dbReference>
<dbReference type="InterPro" id="IPR036291">
    <property type="entry name" value="NAD(P)-bd_dom_sf"/>
</dbReference>
<dbReference type="InterPro" id="IPR051276">
    <property type="entry name" value="Saccharopine_DH-like_oxidrdct"/>
</dbReference>
<dbReference type="InterPro" id="IPR005097">
    <property type="entry name" value="Sacchrp_dh_NADP-bd"/>
</dbReference>
<dbReference type="PANTHER" id="PTHR12286">
    <property type="entry name" value="SACCHAROPINE DEHYDROGENASE-LIKE OXIDOREDUCTASE"/>
    <property type="match status" value="1"/>
</dbReference>
<dbReference type="PANTHER" id="PTHR12286:SF5">
    <property type="entry name" value="SACCHAROPINE DEHYDROGENASE-LIKE OXIDOREDUCTASE"/>
    <property type="match status" value="1"/>
</dbReference>
<dbReference type="Pfam" id="PF03435">
    <property type="entry name" value="Sacchrp_dh_NADP"/>
    <property type="match status" value="1"/>
</dbReference>
<dbReference type="SUPFAM" id="SSF51735">
    <property type="entry name" value="NAD(P)-binding Rossmann-fold domains"/>
    <property type="match status" value="1"/>
</dbReference>
<accession>P9WGV4</accession>
<accession>L0TE19</accession>
<accession>P95139</accession>
<accession>Q50462</accession>
<accession>Q50463</accession>
<accession>Q7D6D4</accession>
<keyword id="KW-0444">Lipid biosynthesis</keyword>
<keyword id="KW-0443">Lipid metabolism</keyword>
<keyword id="KW-0560">Oxidoreductase</keyword>
<keyword id="KW-1185">Reference proteome</keyword>
<proteinExistence type="inferred from homology"/>